<keyword id="KW-0968">Cytoplasmic vesicle</keyword>
<keyword id="KW-0903">Direct protein sequencing</keyword>
<keyword id="KW-1015">Disulfide bond</keyword>
<keyword id="KW-0272">Extracellular matrix</keyword>
<keyword id="KW-0325">Glycoprotein</keyword>
<keyword id="KW-0472">Membrane</keyword>
<keyword id="KW-0873">Pyrrolidone carboxylic acid</keyword>
<keyword id="KW-1185">Reference proteome</keyword>
<keyword id="KW-0964">Secreted</keyword>
<keyword id="KW-0732">Signal</keyword>
<keyword id="KW-0812">Transmembrane</keyword>
<keyword id="KW-1133">Transmembrane helix</keyword>
<organism evidence="10">
    <name type="scientific">Salmo salar</name>
    <name type="common">Atlantic salmon</name>
    <dbReference type="NCBI Taxonomy" id="8030"/>
    <lineage>
        <taxon>Eukaryota</taxon>
        <taxon>Metazoa</taxon>
        <taxon>Chordata</taxon>
        <taxon>Craniata</taxon>
        <taxon>Vertebrata</taxon>
        <taxon>Euteleostomi</taxon>
        <taxon>Actinopterygii</taxon>
        <taxon>Neopterygii</taxon>
        <taxon>Teleostei</taxon>
        <taxon>Protacanthopterygii</taxon>
        <taxon>Salmoniformes</taxon>
        <taxon>Salmonidae</taxon>
        <taxon>Salmoninae</taxon>
        <taxon>Salmo</taxon>
    </lineage>
</organism>
<evidence type="ECO:0000250" key="1">
    <source>
        <dbReference type="UniProtKB" id="P10761"/>
    </source>
</evidence>
<evidence type="ECO:0000250" key="2">
    <source>
        <dbReference type="UniProtKB" id="Q8TCW7"/>
    </source>
</evidence>
<evidence type="ECO:0000255" key="3"/>
<evidence type="ECO:0000255" key="4">
    <source>
        <dbReference type="PROSITE-ProRule" id="PRU00375"/>
    </source>
</evidence>
<evidence type="ECO:0000255" key="5">
    <source>
        <dbReference type="PROSITE-ProRule" id="PRU00498"/>
    </source>
</evidence>
<evidence type="ECO:0000269" key="6">
    <source>
    </source>
</evidence>
<evidence type="ECO:0000303" key="7">
    <source>
    </source>
</evidence>
<evidence type="ECO:0000305" key="8"/>
<evidence type="ECO:0000305" key="9">
    <source>
    </source>
</evidence>
<evidence type="ECO:0000312" key="10">
    <source>
        <dbReference type="EMBL" id="ACN10635.1"/>
    </source>
</evidence>
<name>ZPLD1_SALSA</name>
<gene>
    <name evidence="2" type="primary">zpld1</name>
</gene>
<protein>
    <recommendedName>
        <fullName evidence="2">Zona pellucida-like domain-containing protein 1</fullName>
        <shortName evidence="2">ZP domain-containing protein 1</shortName>
    </recommendedName>
    <alternativeName>
        <fullName evidence="7">Cupulin</fullName>
    </alternativeName>
    <component>
        <recommendedName>
            <fullName evidence="8">Zona pellucida-like domain-containing protein 1, secreted form</fullName>
        </recommendedName>
    </component>
</protein>
<reference evidence="10" key="1">
    <citation type="journal article" date="2010" name="BMC Genomics">
        <title>Salmo salar and Esox lucius full-length cDNA sequences reveal changes in evolutionary pressures on a post-tetraploidization genome.</title>
        <authorList>
            <person name="Leong J.S."/>
            <person name="Jantzen S.G."/>
            <person name="von Schalburg K.R."/>
            <person name="Cooper G.A."/>
            <person name="Messmer A.M."/>
            <person name="Liao N.Y."/>
            <person name="Munro S."/>
            <person name="Moore R."/>
            <person name="Holt R.A."/>
            <person name="Jones S.J."/>
            <person name="Davidson W.S."/>
            <person name="Koop B.F."/>
        </authorList>
    </citation>
    <scope>NUCLEOTIDE SEQUENCE [MRNA]</scope>
    <source>
        <tissue evidence="10">Brain</tissue>
    </source>
</reference>
<reference evidence="8" key="2">
    <citation type="journal article" date="2014" name="PLoS ONE">
        <title>Cupulin is a zona pellucida-like domain protein and major component of the cupula from the inner ear.</title>
        <authorList>
            <person name="Dernedde J."/>
            <person name="Weise C."/>
            <person name="Mueller E.C."/>
            <person name="Hagiwara A."/>
            <person name="Bachmann S."/>
            <person name="Suzuki M."/>
            <person name="Reutter W."/>
            <person name="Tauber R."/>
            <person name="Scherer H."/>
        </authorList>
    </citation>
    <scope>PROTEIN SEQUENCE OF 20-32; 34-52; 74-80; 228-248; 274-280 AND 289-299</scope>
    <scope>FUNCTION</scope>
    <scope>SUBCELLULAR LOCATION</scope>
    <scope>TISSUE SPECIFICITY</scope>
    <scope>GLYCOSYLATION</scope>
    <scope>PYROGLUTAMATE FORMATION AT GLN-20</scope>
    <scope>PROTEOLYTIC CLEAVAGE</scope>
    <scope>IDENTIFICATION BY MASS SPECTROMETRY</scope>
</reference>
<accession>C0H9B6</accession>
<proteinExistence type="evidence at protein level"/>
<dbReference type="EMBL" id="BT058922">
    <property type="protein sequence ID" value="ACN10635.1"/>
    <property type="molecule type" value="mRNA"/>
</dbReference>
<dbReference type="RefSeq" id="NP_001158864.1">
    <property type="nucleotide sequence ID" value="NM_001165392.1"/>
</dbReference>
<dbReference type="SMR" id="C0H9B6"/>
<dbReference type="STRING" id="8030.ENSSSAP00000033267"/>
<dbReference type="GlyCosmos" id="C0H9B6">
    <property type="glycosylation" value="7 sites, No reported glycans"/>
</dbReference>
<dbReference type="PaxDb" id="8030-ENSSSAP00000033267"/>
<dbReference type="Ensembl" id="ENSSSAT00070047250">
    <property type="protein sequence ID" value="ENSSSAP00070045294"/>
    <property type="gene ID" value="ENSSSAG00070029456"/>
</dbReference>
<dbReference type="GeneID" id="100306853"/>
<dbReference type="KEGG" id="sasa:100306853"/>
<dbReference type="CTD" id="560177"/>
<dbReference type="Proteomes" id="UP000087266">
    <property type="component" value="Chromosome ssa04"/>
</dbReference>
<dbReference type="GO" id="GO:0062023">
    <property type="term" value="C:collagen-containing extracellular matrix"/>
    <property type="evidence" value="ECO:0000314"/>
    <property type="project" value="UniProtKB"/>
</dbReference>
<dbReference type="GO" id="GO:0030659">
    <property type="term" value="C:cytoplasmic vesicle membrane"/>
    <property type="evidence" value="ECO:0000314"/>
    <property type="project" value="UniProtKB"/>
</dbReference>
<dbReference type="GO" id="GO:0005576">
    <property type="term" value="C:extracellular region"/>
    <property type="evidence" value="ECO:0007669"/>
    <property type="project" value="UniProtKB-KW"/>
</dbReference>
<dbReference type="FunFam" id="2.60.40.4100:FF:000008">
    <property type="entry name" value="Zona pellucida-like domain containing 1a"/>
    <property type="match status" value="1"/>
</dbReference>
<dbReference type="Gene3D" id="2.60.40.4100">
    <property type="entry name" value="Zona pellucida, ZP-C domain"/>
    <property type="match status" value="1"/>
</dbReference>
<dbReference type="InterPro" id="IPR055355">
    <property type="entry name" value="ZP-C"/>
</dbReference>
<dbReference type="InterPro" id="IPR042235">
    <property type="entry name" value="ZP-C_dom"/>
</dbReference>
<dbReference type="InterPro" id="IPR055356">
    <property type="entry name" value="ZP-N"/>
</dbReference>
<dbReference type="InterPro" id="IPR001507">
    <property type="entry name" value="ZP_dom"/>
</dbReference>
<dbReference type="PANTHER" id="PTHR14002">
    <property type="entry name" value="ENDOGLIN/TGF-BETA RECEPTOR TYPE III"/>
    <property type="match status" value="1"/>
</dbReference>
<dbReference type="PANTHER" id="PTHR14002:SF24">
    <property type="entry name" value="ZONA PELLUCIDA-LIKE DOMAIN-CONTAINING PROTEIN 1"/>
    <property type="match status" value="1"/>
</dbReference>
<dbReference type="Pfam" id="PF00100">
    <property type="entry name" value="Zona_pellucida"/>
    <property type="match status" value="1"/>
</dbReference>
<dbReference type="Pfam" id="PF23344">
    <property type="entry name" value="ZP-N"/>
    <property type="match status" value="1"/>
</dbReference>
<dbReference type="SMART" id="SM00241">
    <property type="entry name" value="ZP"/>
    <property type="match status" value="1"/>
</dbReference>
<dbReference type="PROSITE" id="PS51034">
    <property type="entry name" value="ZP_2"/>
    <property type="match status" value="1"/>
</dbReference>
<sequence length="413" mass="45203">MEQICLIILLISKALSVGAQFNGYNCDANFHSRFPAERDISVYCGVQTITLKINFCPVLFSGYTDTDLALNGRHGDAHCRGFINNNTFPTVVLFSISLATLETCGNALVVSTAQGPNAYGNLSLVQIGNISGYIDTPDPPTIISYLPGLLYKFSCSYPLEYLVNNTQLASSAAAISVKDSNGTFVSTLSLLLYNDSSYVQQLSIPMAGLTLKTRVFAAVKATNLDRRWNVLMDYCYTTASGNPNDELRYDLFFSCDKDPQTTVFENGKSQMGRFAFEVFRFVKHKNQKMSTVFLHCVTKLCRADDCPMLMPICGSRKKRDVSERTESNSASGNAIITAGPIITRSDDTPMNNSQLAQLNSPVFRMNTVTSALISGIIILGVMSLCFFILSLTLLKGKRAPPTILSGARNPAFN</sequence>
<feature type="signal peptide" evidence="6">
    <location>
        <begin position="1"/>
        <end position="19"/>
    </location>
</feature>
<feature type="chain" id="PRO_5009732475" description="Zona pellucida-like domain-containing protein 1">
    <location>
        <begin position="20"/>
        <end position="413"/>
    </location>
</feature>
<feature type="chain" id="PRO_0000441818" description="Zona pellucida-like domain-containing protein 1, secreted form" evidence="8">
    <location>
        <begin position="20"/>
        <end position="319"/>
    </location>
</feature>
<feature type="topological domain" description="Extracellular" evidence="8">
    <location>
        <begin position="20"/>
        <end position="370"/>
    </location>
</feature>
<feature type="transmembrane region" description="Helical" evidence="3">
    <location>
        <begin position="371"/>
        <end position="391"/>
    </location>
</feature>
<feature type="topological domain" description="Cytoplasmic" evidence="8">
    <location>
        <begin position="392"/>
        <end position="413"/>
    </location>
</feature>
<feature type="domain" description="ZP" evidence="4">
    <location>
        <begin position="43"/>
        <end position="320"/>
    </location>
</feature>
<feature type="site" description="Cleavage" evidence="1">
    <location>
        <begin position="319"/>
        <end position="320"/>
    </location>
</feature>
<feature type="modified residue" description="Pyrrolidone carboxylic acid" evidence="6">
    <location>
        <position position="20"/>
    </location>
</feature>
<feature type="glycosylation site" description="N-linked (GlcNAc...) asparagine" evidence="5">
    <location>
        <position position="85"/>
    </location>
</feature>
<feature type="glycosylation site" description="N-linked (GlcNAc...) asparagine" evidence="5">
    <location>
        <position position="121"/>
    </location>
</feature>
<feature type="glycosylation site" description="N-linked (GlcNAc...) asparagine" evidence="5">
    <location>
        <position position="129"/>
    </location>
</feature>
<feature type="glycosylation site" description="N-linked (GlcNAc...) asparagine" evidence="5">
    <location>
        <position position="164"/>
    </location>
</feature>
<feature type="glycosylation site" description="N-linked (GlcNAc...) asparagine" evidence="5">
    <location>
        <position position="181"/>
    </location>
</feature>
<feature type="glycosylation site" description="N-linked (GlcNAc...) asparagine" evidence="5">
    <location>
        <position position="194"/>
    </location>
</feature>
<feature type="glycosylation site" description="N-linked (GlcNAc...) asparagine" evidence="5">
    <location>
        <position position="351"/>
    </location>
</feature>
<feature type="disulfide bond" evidence="1">
    <location>
        <begin position="44"/>
        <end position="155"/>
    </location>
</feature>
<feature type="disulfide bond" evidence="1">
    <location>
        <begin position="79"/>
        <end position="104"/>
    </location>
</feature>
<feature type="disulfide bond" evidence="1">
    <location>
        <begin position="235"/>
        <end position="296"/>
    </location>
</feature>
<feature type="disulfide bond" evidence="1">
    <location>
        <begin position="255"/>
        <end position="313"/>
    </location>
</feature>
<feature type="sequence conflict" description="In Ref. 2; AA sequence." evidence="8" ref="2">
    <original>N</original>
    <variation>D</variation>
    <location>
        <position position="22"/>
    </location>
</feature>
<comment type="function">
    <text evidence="6">Glycoprotein which is a component of the gelatinous extracellular matrix in the cupulae of the vestibular organ.</text>
</comment>
<comment type="subcellular location">
    <molecule>Zona pellucida-like domain-containing protein 1</molecule>
    <subcellularLocation>
        <location evidence="9">Cytoplasmic vesicle membrane</location>
        <topology evidence="3">Single-pass type I membrane protein</topology>
    </subcellularLocation>
</comment>
<comment type="subcellular location">
    <molecule>Zona pellucida-like domain-containing protein 1, secreted form</molecule>
    <subcellularLocation>
        <location evidence="9">Secreted</location>
        <location evidence="9">Extracellular space</location>
        <location evidence="9">Extracellular matrix</location>
    </subcellularLocation>
</comment>
<comment type="tissue specificity">
    <text evidence="6">Detected in the acellular cupulae of the vestibular organ, and also in support cells adjacent to the cupula (at protein level).</text>
</comment>
<comment type="PTM">
    <text evidence="9">Proteolytically cleaved before the transmembrane segment to yield the secreted form found in the extracellular matrix of the cupula.</text>
</comment>
<comment type="PTM">
    <text evidence="6">N-glycosylated.</text>
</comment>